<comment type="subunit">
    <text evidence="1">Part of the 50S ribosomal subunit.</text>
</comment>
<comment type="similarity">
    <text evidence="1">Belongs to the universal ribosomal protein uL30 family.</text>
</comment>
<feature type="chain" id="PRO_0000273760" description="Large ribosomal subunit protein uL30">
    <location>
        <begin position="1"/>
        <end position="60"/>
    </location>
</feature>
<proteinExistence type="inferred from homology"/>
<dbReference type="EMBL" id="CP000124">
    <property type="protein sequence ID" value="ABA47884.1"/>
    <property type="molecule type" value="Genomic_DNA"/>
</dbReference>
<dbReference type="RefSeq" id="WP_004202755.1">
    <property type="nucleotide sequence ID" value="NC_007434.1"/>
</dbReference>
<dbReference type="SMR" id="Q3JMT1"/>
<dbReference type="EnsemblBacteria" id="ABA47884">
    <property type="protein sequence ID" value="ABA47884"/>
    <property type="gene ID" value="BURPS1710b_3758"/>
</dbReference>
<dbReference type="GeneID" id="93061814"/>
<dbReference type="KEGG" id="bpm:BURPS1710b_3758"/>
<dbReference type="HOGENOM" id="CLU_131047_1_4_4"/>
<dbReference type="Proteomes" id="UP000002700">
    <property type="component" value="Chromosome I"/>
</dbReference>
<dbReference type="GO" id="GO:0022625">
    <property type="term" value="C:cytosolic large ribosomal subunit"/>
    <property type="evidence" value="ECO:0007669"/>
    <property type="project" value="TreeGrafter"/>
</dbReference>
<dbReference type="GO" id="GO:0003735">
    <property type="term" value="F:structural constituent of ribosome"/>
    <property type="evidence" value="ECO:0007669"/>
    <property type="project" value="InterPro"/>
</dbReference>
<dbReference type="GO" id="GO:0006412">
    <property type="term" value="P:translation"/>
    <property type="evidence" value="ECO:0007669"/>
    <property type="project" value="UniProtKB-UniRule"/>
</dbReference>
<dbReference type="CDD" id="cd01658">
    <property type="entry name" value="Ribosomal_L30"/>
    <property type="match status" value="1"/>
</dbReference>
<dbReference type="FunFam" id="3.30.1390.20:FF:000001">
    <property type="entry name" value="50S ribosomal protein L30"/>
    <property type="match status" value="1"/>
</dbReference>
<dbReference type="Gene3D" id="3.30.1390.20">
    <property type="entry name" value="Ribosomal protein L30, ferredoxin-like fold domain"/>
    <property type="match status" value="1"/>
</dbReference>
<dbReference type="HAMAP" id="MF_01371_B">
    <property type="entry name" value="Ribosomal_uL30_B"/>
    <property type="match status" value="1"/>
</dbReference>
<dbReference type="InterPro" id="IPR036919">
    <property type="entry name" value="Ribo_uL30_ferredoxin-like_sf"/>
</dbReference>
<dbReference type="InterPro" id="IPR005996">
    <property type="entry name" value="Ribosomal_uL30_bac-type"/>
</dbReference>
<dbReference type="InterPro" id="IPR016082">
    <property type="entry name" value="Ribosomal_uL30_ferredoxin-like"/>
</dbReference>
<dbReference type="NCBIfam" id="TIGR01308">
    <property type="entry name" value="rpmD_bact"/>
    <property type="match status" value="1"/>
</dbReference>
<dbReference type="PANTHER" id="PTHR15892:SF2">
    <property type="entry name" value="LARGE RIBOSOMAL SUBUNIT PROTEIN UL30M"/>
    <property type="match status" value="1"/>
</dbReference>
<dbReference type="PANTHER" id="PTHR15892">
    <property type="entry name" value="MITOCHONDRIAL RIBOSOMAL PROTEIN L30"/>
    <property type="match status" value="1"/>
</dbReference>
<dbReference type="Pfam" id="PF00327">
    <property type="entry name" value="Ribosomal_L30"/>
    <property type="match status" value="1"/>
</dbReference>
<dbReference type="PIRSF" id="PIRSF002211">
    <property type="entry name" value="Ribosomal_L30_bac-type"/>
    <property type="match status" value="1"/>
</dbReference>
<dbReference type="SUPFAM" id="SSF55129">
    <property type="entry name" value="Ribosomal protein L30p/L7e"/>
    <property type="match status" value="1"/>
</dbReference>
<gene>
    <name evidence="1" type="primary">rpmD</name>
    <name type="ordered locus">BURPS1710b_3758</name>
</gene>
<accession>Q3JMT1</accession>
<name>RL30_BURP1</name>
<organism>
    <name type="scientific">Burkholderia pseudomallei (strain 1710b)</name>
    <dbReference type="NCBI Taxonomy" id="320372"/>
    <lineage>
        <taxon>Bacteria</taxon>
        <taxon>Pseudomonadati</taxon>
        <taxon>Pseudomonadota</taxon>
        <taxon>Betaproteobacteria</taxon>
        <taxon>Burkholderiales</taxon>
        <taxon>Burkholderiaceae</taxon>
        <taxon>Burkholderia</taxon>
        <taxon>pseudomallei group</taxon>
    </lineage>
</organism>
<keyword id="KW-0687">Ribonucleoprotein</keyword>
<keyword id="KW-0689">Ribosomal protein</keyword>
<protein>
    <recommendedName>
        <fullName evidence="1">Large ribosomal subunit protein uL30</fullName>
    </recommendedName>
    <alternativeName>
        <fullName evidence="2">50S ribosomal protein L30</fullName>
    </alternativeName>
</protein>
<sequence length="60" mass="6621">MSEKTVKVQLVKSLIGTRESHRATVRGLGLRRLNSVSELQDTPAVRGMINKVSYLVKVIG</sequence>
<evidence type="ECO:0000255" key="1">
    <source>
        <dbReference type="HAMAP-Rule" id="MF_01371"/>
    </source>
</evidence>
<evidence type="ECO:0000305" key="2"/>
<reference key="1">
    <citation type="journal article" date="2010" name="Genome Biol. Evol.">
        <title>Continuing evolution of Burkholderia mallei through genome reduction and large-scale rearrangements.</title>
        <authorList>
            <person name="Losada L."/>
            <person name="Ronning C.M."/>
            <person name="DeShazer D."/>
            <person name="Woods D."/>
            <person name="Fedorova N."/>
            <person name="Kim H.S."/>
            <person name="Shabalina S.A."/>
            <person name="Pearson T.R."/>
            <person name="Brinkac L."/>
            <person name="Tan P."/>
            <person name="Nandi T."/>
            <person name="Crabtree J."/>
            <person name="Badger J."/>
            <person name="Beckstrom-Sternberg S."/>
            <person name="Saqib M."/>
            <person name="Schutzer S.E."/>
            <person name="Keim P."/>
            <person name="Nierman W.C."/>
        </authorList>
    </citation>
    <scope>NUCLEOTIDE SEQUENCE [LARGE SCALE GENOMIC DNA]</scope>
    <source>
        <strain>1710b</strain>
    </source>
</reference>